<organism>
    <name type="scientific">Psychromonas ingrahamii (strain DSM 17664 / CCUG 51855 / 37)</name>
    <dbReference type="NCBI Taxonomy" id="357804"/>
    <lineage>
        <taxon>Bacteria</taxon>
        <taxon>Pseudomonadati</taxon>
        <taxon>Pseudomonadota</taxon>
        <taxon>Gammaproteobacteria</taxon>
        <taxon>Alteromonadales</taxon>
        <taxon>Psychromonadaceae</taxon>
        <taxon>Psychromonas</taxon>
    </lineage>
</organism>
<feature type="chain" id="PRO_1000003034" description="Phospho-N-acetylmuramoyl-pentapeptide-transferase">
    <location>
        <begin position="1"/>
        <end position="360"/>
    </location>
</feature>
<feature type="transmembrane region" description="Helical" evidence="1">
    <location>
        <begin position="27"/>
        <end position="47"/>
    </location>
</feature>
<feature type="transmembrane region" description="Helical" evidence="1">
    <location>
        <begin position="71"/>
        <end position="91"/>
    </location>
</feature>
<feature type="transmembrane region" description="Helical" evidence="1">
    <location>
        <begin position="98"/>
        <end position="118"/>
    </location>
</feature>
<feature type="transmembrane region" description="Helical" evidence="1">
    <location>
        <begin position="142"/>
        <end position="162"/>
    </location>
</feature>
<feature type="transmembrane region" description="Helical" evidence="1">
    <location>
        <begin position="168"/>
        <end position="188"/>
    </location>
</feature>
<feature type="transmembrane region" description="Helical" evidence="1">
    <location>
        <begin position="199"/>
        <end position="219"/>
    </location>
</feature>
<feature type="transmembrane region" description="Helical" evidence="1">
    <location>
        <begin position="236"/>
        <end position="256"/>
    </location>
</feature>
<feature type="transmembrane region" description="Helical" evidence="1">
    <location>
        <begin position="263"/>
        <end position="283"/>
    </location>
</feature>
<feature type="transmembrane region" description="Helical" evidence="1">
    <location>
        <begin position="288"/>
        <end position="308"/>
    </location>
</feature>
<feature type="transmembrane region" description="Helical" evidence="1">
    <location>
        <begin position="338"/>
        <end position="358"/>
    </location>
</feature>
<keyword id="KW-0131">Cell cycle</keyword>
<keyword id="KW-0132">Cell division</keyword>
<keyword id="KW-0997">Cell inner membrane</keyword>
<keyword id="KW-1003">Cell membrane</keyword>
<keyword id="KW-0133">Cell shape</keyword>
<keyword id="KW-0961">Cell wall biogenesis/degradation</keyword>
<keyword id="KW-0460">Magnesium</keyword>
<keyword id="KW-0472">Membrane</keyword>
<keyword id="KW-0479">Metal-binding</keyword>
<keyword id="KW-0573">Peptidoglycan synthesis</keyword>
<keyword id="KW-1185">Reference proteome</keyword>
<keyword id="KW-0808">Transferase</keyword>
<keyword id="KW-0812">Transmembrane</keyword>
<keyword id="KW-1133">Transmembrane helix</keyword>
<dbReference type="EC" id="2.7.8.13" evidence="1"/>
<dbReference type="EMBL" id="CP000510">
    <property type="protein sequence ID" value="ABM02981.1"/>
    <property type="molecule type" value="Genomic_DNA"/>
</dbReference>
<dbReference type="RefSeq" id="WP_011769544.1">
    <property type="nucleotide sequence ID" value="NC_008709.1"/>
</dbReference>
<dbReference type="SMR" id="A1SU16"/>
<dbReference type="STRING" id="357804.Ping_1144"/>
<dbReference type="KEGG" id="pin:Ping_1144"/>
<dbReference type="eggNOG" id="COG0472">
    <property type="taxonomic scope" value="Bacteria"/>
</dbReference>
<dbReference type="HOGENOM" id="CLU_023982_0_0_6"/>
<dbReference type="OrthoDB" id="9805475at2"/>
<dbReference type="UniPathway" id="UPA00219"/>
<dbReference type="Proteomes" id="UP000000639">
    <property type="component" value="Chromosome"/>
</dbReference>
<dbReference type="GO" id="GO:0005886">
    <property type="term" value="C:plasma membrane"/>
    <property type="evidence" value="ECO:0007669"/>
    <property type="project" value="UniProtKB-SubCell"/>
</dbReference>
<dbReference type="GO" id="GO:0046872">
    <property type="term" value="F:metal ion binding"/>
    <property type="evidence" value="ECO:0007669"/>
    <property type="project" value="UniProtKB-KW"/>
</dbReference>
<dbReference type="GO" id="GO:0008963">
    <property type="term" value="F:phospho-N-acetylmuramoyl-pentapeptide-transferase activity"/>
    <property type="evidence" value="ECO:0007669"/>
    <property type="project" value="UniProtKB-UniRule"/>
</dbReference>
<dbReference type="GO" id="GO:0051992">
    <property type="term" value="F:UDP-N-acetylmuramoyl-L-alanyl-D-glutamyl-meso-2,6-diaminopimelyl-D-alanyl-D-alanine:undecaprenyl-phosphate transferase activity"/>
    <property type="evidence" value="ECO:0007669"/>
    <property type="project" value="RHEA"/>
</dbReference>
<dbReference type="GO" id="GO:0051301">
    <property type="term" value="P:cell division"/>
    <property type="evidence" value="ECO:0007669"/>
    <property type="project" value="UniProtKB-KW"/>
</dbReference>
<dbReference type="GO" id="GO:0071555">
    <property type="term" value="P:cell wall organization"/>
    <property type="evidence" value="ECO:0007669"/>
    <property type="project" value="UniProtKB-KW"/>
</dbReference>
<dbReference type="GO" id="GO:0009252">
    <property type="term" value="P:peptidoglycan biosynthetic process"/>
    <property type="evidence" value="ECO:0007669"/>
    <property type="project" value="UniProtKB-UniRule"/>
</dbReference>
<dbReference type="GO" id="GO:0008360">
    <property type="term" value="P:regulation of cell shape"/>
    <property type="evidence" value="ECO:0007669"/>
    <property type="project" value="UniProtKB-KW"/>
</dbReference>
<dbReference type="CDD" id="cd06852">
    <property type="entry name" value="GT_MraY"/>
    <property type="match status" value="1"/>
</dbReference>
<dbReference type="HAMAP" id="MF_00038">
    <property type="entry name" value="MraY"/>
    <property type="match status" value="1"/>
</dbReference>
<dbReference type="InterPro" id="IPR000715">
    <property type="entry name" value="Glycosyl_transferase_4"/>
</dbReference>
<dbReference type="InterPro" id="IPR003524">
    <property type="entry name" value="PNAcMuramoyl-5peptid_Trfase"/>
</dbReference>
<dbReference type="InterPro" id="IPR018480">
    <property type="entry name" value="PNAcMuramoyl-5peptid_Trfase_CS"/>
</dbReference>
<dbReference type="NCBIfam" id="TIGR00445">
    <property type="entry name" value="mraY"/>
    <property type="match status" value="1"/>
</dbReference>
<dbReference type="PANTHER" id="PTHR22926">
    <property type="entry name" value="PHOSPHO-N-ACETYLMURAMOYL-PENTAPEPTIDE-TRANSFERASE"/>
    <property type="match status" value="1"/>
</dbReference>
<dbReference type="PANTHER" id="PTHR22926:SF5">
    <property type="entry name" value="PHOSPHO-N-ACETYLMURAMOYL-PENTAPEPTIDE-TRANSFERASE HOMOLOG"/>
    <property type="match status" value="1"/>
</dbReference>
<dbReference type="Pfam" id="PF00953">
    <property type="entry name" value="Glycos_transf_4"/>
    <property type="match status" value="1"/>
</dbReference>
<dbReference type="Pfam" id="PF10555">
    <property type="entry name" value="MraY_sig1"/>
    <property type="match status" value="1"/>
</dbReference>
<dbReference type="PROSITE" id="PS01347">
    <property type="entry name" value="MRAY_1"/>
    <property type="match status" value="1"/>
</dbReference>
<dbReference type="PROSITE" id="PS01348">
    <property type="entry name" value="MRAY_2"/>
    <property type="match status" value="1"/>
</dbReference>
<reference key="1">
    <citation type="journal article" date="2008" name="BMC Genomics">
        <title>Genomics of an extreme psychrophile, Psychromonas ingrahamii.</title>
        <authorList>
            <person name="Riley M."/>
            <person name="Staley J.T."/>
            <person name="Danchin A."/>
            <person name="Wang T.Z."/>
            <person name="Brettin T.S."/>
            <person name="Hauser L.J."/>
            <person name="Land M.L."/>
            <person name="Thompson L.S."/>
        </authorList>
    </citation>
    <scope>NUCLEOTIDE SEQUENCE [LARGE SCALE GENOMIC DNA]</scope>
    <source>
        <strain>DSM 17664 / CCUG 51855 / 37</strain>
    </source>
</reference>
<name>MRAY_PSYIN</name>
<accession>A1SU16</accession>
<protein>
    <recommendedName>
        <fullName evidence="1">Phospho-N-acetylmuramoyl-pentapeptide-transferase</fullName>
        <ecNumber evidence="1">2.7.8.13</ecNumber>
    </recommendedName>
    <alternativeName>
        <fullName evidence="1">UDP-MurNAc-pentapeptide phosphotransferase</fullName>
    </alternativeName>
</protein>
<gene>
    <name evidence="1" type="primary">mraY</name>
    <name type="ordered locus">Ping_1144</name>
</gene>
<evidence type="ECO:0000255" key="1">
    <source>
        <dbReference type="HAMAP-Rule" id="MF_00038"/>
    </source>
</evidence>
<comment type="function">
    <text evidence="1">Catalyzes the initial step of the lipid cycle reactions in the biosynthesis of the cell wall peptidoglycan: transfers peptidoglycan precursor phospho-MurNAc-pentapeptide from UDP-MurNAc-pentapeptide onto the lipid carrier undecaprenyl phosphate, yielding undecaprenyl-pyrophosphoryl-MurNAc-pentapeptide, known as lipid I.</text>
</comment>
<comment type="catalytic activity">
    <reaction evidence="1">
        <text>UDP-N-acetyl-alpha-D-muramoyl-L-alanyl-gamma-D-glutamyl-meso-2,6-diaminopimeloyl-D-alanyl-D-alanine + di-trans,octa-cis-undecaprenyl phosphate = di-trans,octa-cis-undecaprenyl diphospho-N-acetyl-alpha-D-muramoyl-L-alanyl-D-glutamyl-meso-2,6-diaminopimeloyl-D-alanyl-D-alanine + UMP</text>
        <dbReference type="Rhea" id="RHEA:28386"/>
        <dbReference type="ChEBI" id="CHEBI:57865"/>
        <dbReference type="ChEBI" id="CHEBI:60392"/>
        <dbReference type="ChEBI" id="CHEBI:61386"/>
        <dbReference type="ChEBI" id="CHEBI:61387"/>
        <dbReference type="EC" id="2.7.8.13"/>
    </reaction>
</comment>
<comment type="cofactor">
    <cofactor evidence="1">
        <name>Mg(2+)</name>
        <dbReference type="ChEBI" id="CHEBI:18420"/>
    </cofactor>
</comment>
<comment type="pathway">
    <text evidence="1">Cell wall biogenesis; peptidoglycan biosynthesis.</text>
</comment>
<comment type="subcellular location">
    <subcellularLocation>
        <location evidence="1">Cell inner membrane</location>
        <topology evidence="1">Multi-pass membrane protein</topology>
    </subcellularLocation>
</comment>
<comment type="similarity">
    <text evidence="1">Belongs to the glycosyltransferase 4 family. MraY subfamily.</text>
</comment>
<proteinExistence type="inferred from homology"/>
<sequence length="360" mass="40117">MIVWLAELLSSQFTFLNVLTYLSVRTVMAVLTALAFSLFFGPKLIRFLQKFQIGQIVRQDGPESHFSKAGTPTMGGILILGAITFSSLLWARLDNSYVWIVLFTTLAFGAIGFMDDYLKVVRKHPDGLIARWKYFWQSVTALVLAVVLFLSATTPAELTFVMPFFKQYMPYLGLAFIPLVYFTVVGSSNAVNLTDGLDGLAIMPTVMVAAAFALIAYLTSHVNYAHYLYIPYIPKASELVVICGTIVGAGLGFLWFNTYPAQVFMGDVGSLALGALLGVIAVLVRQEILLVIMGGIFVVETLSVILQVGSYKMRKRRIFRMAPIHHHYEKKGWPEPRVIVRFWIITIVLVLIGLVTLKVR</sequence>